<feature type="chain" id="PRO_0000065006" description="Protein btn1">
    <location>
        <begin position="1"/>
        <end position="396"/>
    </location>
</feature>
<feature type="transmembrane region" description="Helical" evidence="1">
    <location>
        <begin position="15"/>
        <end position="35"/>
    </location>
</feature>
<feature type="transmembrane region" description="Helical" evidence="1">
    <location>
        <begin position="45"/>
        <end position="65"/>
    </location>
</feature>
<feature type="transmembrane region" description="Helical" evidence="1">
    <location>
        <begin position="76"/>
        <end position="96"/>
    </location>
</feature>
<feature type="transmembrane region" description="Helical" evidence="1">
    <location>
        <begin position="138"/>
        <end position="158"/>
    </location>
</feature>
<feature type="transmembrane region" description="Helical" evidence="1">
    <location>
        <begin position="161"/>
        <end position="181"/>
    </location>
</feature>
<feature type="transmembrane region" description="Helical" evidence="1">
    <location>
        <begin position="234"/>
        <end position="254"/>
    </location>
</feature>
<feature type="transmembrane region" description="Helical" evidence="1">
    <location>
        <begin position="296"/>
        <end position="316"/>
    </location>
</feature>
<feature type="transmembrane region" description="Helical" evidence="1">
    <location>
        <begin position="321"/>
        <end position="341"/>
    </location>
</feature>
<feature type="mutagenesis site" description="Retarded location in the endoplasmic reticulum; enlarged vacuoles." evidence="2">
    <original>G</original>
    <variation>A</variation>
    <location>
        <position position="137"/>
    </location>
</feature>
<feature type="mutagenesis site" description="Normal trafficking to vacuolar membrane but slower than wild-type; enlarged vacuoles." evidence="2">
    <original>E</original>
    <variation>K</variation>
    <location>
        <position position="240"/>
    </location>
</feature>
<feature type="mutagenesis site" description="Normal trafficking to vacuolar membrane but slower than wild-type; enlarged vacuoles." evidence="2">
    <original>V</original>
    <variation>F</variation>
    <location>
        <position position="278"/>
    </location>
</feature>
<protein>
    <recommendedName>
        <fullName>Protein btn1</fullName>
    </recommendedName>
</protein>
<dbReference type="EMBL" id="CU329670">
    <property type="protein sequence ID" value="CAB63796.1"/>
    <property type="molecule type" value="Genomic_DNA"/>
</dbReference>
<dbReference type="PIR" id="T50229">
    <property type="entry name" value="T50229"/>
</dbReference>
<dbReference type="RefSeq" id="NP_593598.1">
    <property type="nucleotide sequence ID" value="NM_001019029.2"/>
</dbReference>
<dbReference type="SMR" id="Q9US09"/>
<dbReference type="BioGRID" id="280059">
    <property type="interactions" value="469"/>
</dbReference>
<dbReference type="FunCoup" id="Q9US09">
    <property type="interactions" value="142"/>
</dbReference>
<dbReference type="STRING" id="284812.Q9US09"/>
<dbReference type="SwissPalm" id="Q9US09"/>
<dbReference type="PaxDb" id="4896-SPAC607.09c.1"/>
<dbReference type="EnsemblFungi" id="SPAC607.09c.1">
    <property type="protein sequence ID" value="SPAC607.09c.1:pep"/>
    <property type="gene ID" value="SPAC607.09c"/>
</dbReference>
<dbReference type="GeneID" id="2543645"/>
<dbReference type="KEGG" id="spo:2543645"/>
<dbReference type="PomBase" id="SPAC607.09c">
    <property type="gene designation" value="btn1"/>
</dbReference>
<dbReference type="VEuPathDB" id="FungiDB:SPAC607.09c"/>
<dbReference type="eggNOG" id="KOG3880">
    <property type="taxonomic scope" value="Eukaryota"/>
</dbReference>
<dbReference type="HOGENOM" id="CLU_029663_1_2_1"/>
<dbReference type="InParanoid" id="Q9US09"/>
<dbReference type="OMA" id="WLCNWQV"/>
<dbReference type="PhylomeDB" id="Q9US09"/>
<dbReference type="Reactome" id="R-SPO-9845576">
    <property type="pathway name" value="Glycosphingolipid transport"/>
</dbReference>
<dbReference type="PRO" id="PR:Q9US09"/>
<dbReference type="Proteomes" id="UP000002485">
    <property type="component" value="Chromosome I"/>
</dbReference>
<dbReference type="GO" id="GO:0032153">
    <property type="term" value="C:cell division site"/>
    <property type="evidence" value="ECO:0000314"/>
    <property type="project" value="PomBase"/>
</dbReference>
<dbReference type="GO" id="GO:0051286">
    <property type="term" value="C:cell tip"/>
    <property type="evidence" value="ECO:0000314"/>
    <property type="project" value="PomBase"/>
</dbReference>
<dbReference type="GO" id="GO:0005737">
    <property type="term" value="C:cytoplasm"/>
    <property type="evidence" value="ECO:0000314"/>
    <property type="project" value="PomBase"/>
</dbReference>
<dbReference type="GO" id="GO:0005783">
    <property type="term" value="C:endoplasmic reticulum"/>
    <property type="evidence" value="ECO:0007005"/>
    <property type="project" value="PomBase"/>
</dbReference>
<dbReference type="GO" id="GO:0005789">
    <property type="term" value="C:endoplasmic reticulum membrane"/>
    <property type="evidence" value="ECO:0000305"/>
    <property type="project" value="PomBase"/>
</dbReference>
<dbReference type="GO" id="GO:0000329">
    <property type="term" value="C:fungal-type vacuole membrane"/>
    <property type="evidence" value="ECO:0000314"/>
    <property type="project" value="PomBase"/>
</dbReference>
<dbReference type="GO" id="GO:0005773">
    <property type="term" value="C:vacuole"/>
    <property type="evidence" value="ECO:0000318"/>
    <property type="project" value="GO_Central"/>
</dbReference>
<dbReference type="GO" id="GO:0022857">
    <property type="term" value="F:transmembrane transporter activity"/>
    <property type="evidence" value="ECO:0000255"/>
    <property type="project" value="PomBase"/>
</dbReference>
<dbReference type="GO" id="GO:1903826">
    <property type="term" value="P:L-arginine transmembrane transport"/>
    <property type="evidence" value="ECO:0000266"/>
    <property type="project" value="PomBase"/>
</dbReference>
<dbReference type="GO" id="GO:0051453">
    <property type="term" value="P:regulation of intracellular pH"/>
    <property type="evidence" value="ECO:0000318"/>
    <property type="project" value="GO_Central"/>
</dbReference>
<dbReference type="InterPro" id="IPR003492">
    <property type="entry name" value="Battenin_disease_Cln3"/>
</dbReference>
<dbReference type="InterPro" id="IPR018460">
    <property type="entry name" value="Battenin_disease_Cln3_subgr"/>
</dbReference>
<dbReference type="InterPro" id="IPR036259">
    <property type="entry name" value="MFS_trans_sf"/>
</dbReference>
<dbReference type="PANTHER" id="PTHR10981">
    <property type="entry name" value="BATTENIN"/>
    <property type="match status" value="1"/>
</dbReference>
<dbReference type="PANTHER" id="PTHR10981:SF0">
    <property type="entry name" value="BATTENIN"/>
    <property type="match status" value="1"/>
</dbReference>
<dbReference type="Pfam" id="PF02487">
    <property type="entry name" value="CLN3"/>
    <property type="match status" value="1"/>
</dbReference>
<dbReference type="PIRSF" id="PIRSF015974">
    <property type="entry name" value="CLN3_BTN1"/>
    <property type="match status" value="1"/>
</dbReference>
<dbReference type="PRINTS" id="PR01315">
    <property type="entry name" value="BATTENIN"/>
</dbReference>
<dbReference type="SUPFAM" id="SSF103473">
    <property type="entry name" value="MFS general substrate transporter"/>
    <property type="match status" value="1"/>
</dbReference>
<accession>Q9US09</accession>
<proteinExistence type="evidence at protein level"/>
<organism>
    <name type="scientific">Schizosaccharomyces pombe (strain 972 / ATCC 24843)</name>
    <name type="common">Fission yeast</name>
    <dbReference type="NCBI Taxonomy" id="284812"/>
    <lineage>
        <taxon>Eukaryota</taxon>
        <taxon>Fungi</taxon>
        <taxon>Dikarya</taxon>
        <taxon>Ascomycota</taxon>
        <taxon>Taphrinomycotina</taxon>
        <taxon>Schizosaccharomycetes</taxon>
        <taxon>Schizosaccharomycetales</taxon>
        <taxon>Schizosaccharomycetaceae</taxon>
        <taxon>Schizosaccharomyces</taxon>
    </lineage>
</organism>
<sequence length="396" mass="44014">MIKLRLTKDAKVGCCFLIFGLLNNLLYVIILSAALDLVGANVSKGVVLLSNIVPSLACKLSASILHVHKFKFAKRIGFCVFMSILGMQWIAWSSSVPSKMLGVSLAAISSSFGEISFLHLSSRYHSVSLPCWSSGTGLAGLFGASSYLVMTTWFNFSVRSTLIISSFLPLFLLIMYFFVLPESESTSPSINNNYTPIESIDLRAGHVSFNFVNSLKQTFIFMQPYLLSHMFPQFLVYFSEYTINIGVAPTLLFPPEKAGFSSFRDFYPTYQTVYQIGVFLSRSSISFFTVPYLRTLAITQFIILLFTILQSALYLTSSYHFVLFLIFVEGLIGGTVYVNVYHSLQTTESSQRELAISTVGSSDSSGIFLASLVSLFLEPSLCHFQADRGRDWCALT</sequence>
<evidence type="ECO:0000255" key="1"/>
<evidence type="ECO:0000269" key="2">
    <source>
    </source>
</evidence>
<evidence type="ECO:0000312" key="3">
    <source>
        <dbReference type="EMBL" id="CAB63796.1"/>
    </source>
</evidence>
<comment type="function">
    <text evidence="2">Involved in vacuolar transport and vacuole pH homeostasis. Also required for cytokinesis.</text>
</comment>
<comment type="subcellular location">
    <subcellularLocation>
        <location>Endoplasmic reticulum membrane</location>
        <topology>Multi-pass membrane protein</topology>
    </subcellularLocation>
    <subcellularLocation>
        <location>Vacuole membrane</location>
        <topology>Multi-pass membrane protein</topology>
    </subcellularLocation>
</comment>
<comment type="similarity">
    <text evidence="1">Belongs to the battenin family.</text>
</comment>
<gene>
    <name evidence="3" type="primary">btn1</name>
    <name type="ORF">SPAC607.09c</name>
</gene>
<reference key="1">
    <citation type="journal article" date="2002" name="Nature">
        <title>The genome sequence of Schizosaccharomyces pombe.</title>
        <authorList>
            <person name="Wood V."/>
            <person name="Gwilliam R."/>
            <person name="Rajandream M.A."/>
            <person name="Lyne M.H."/>
            <person name="Lyne R."/>
            <person name="Stewart A."/>
            <person name="Sgouros J.G."/>
            <person name="Peat N."/>
            <person name="Hayles J."/>
            <person name="Baker S.G."/>
            <person name="Basham D."/>
            <person name="Bowman S."/>
            <person name="Brooks K."/>
            <person name="Brown D."/>
            <person name="Brown S."/>
            <person name="Chillingworth T."/>
            <person name="Churcher C.M."/>
            <person name="Collins M."/>
            <person name="Connor R."/>
            <person name="Cronin A."/>
            <person name="Davis P."/>
            <person name="Feltwell T."/>
            <person name="Fraser A."/>
            <person name="Gentles S."/>
            <person name="Goble A."/>
            <person name="Hamlin N."/>
            <person name="Harris D.E."/>
            <person name="Hidalgo J."/>
            <person name="Hodgson G."/>
            <person name="Holroyd S."/>
            <person name="Hornsby T."/>
            <person name="Howarth S."/>
            <person name="Huckle E.J."/>
            <person name="Hunt S."/>
            <person name="Jagels K."/>
            <person name="James K.D."/>
            <person name="Jones L."/>
            <person name="Jones M."/>
            <person name="Leather S."/>
            <person name="McDonald S."/>
            <person name="McLean J."/>
            <person name="Mooney P."/>
            <person name="Moule S."/>
            <person name="Mungall K.L."/>
            <person name="Murphy L.D."/>
            <person name="Niblett D."/>
            <person name="Odell C."/>
            <person name="Oliver K."/>
            <person name="O'Neil S."/>
            <person name="Pearson D."/>
            <person name="Quail M.A."/>
            <person name="Rabbinowitsch E."/>
            <person name="Rutherford K.M."/>
            <person name="Rutter S."/>
            <person name="Saunders D."/>
            <person name="Seeger K."/>
            <person name="Sharp S."/>
            <person name="Skelton J."/>
            <person name="Simmonds M.N."/>
            <person name="Squares R."/>
            <person name="Squares S."/>
            <person name="Stevens K."/>
            <person name="Taylor K."/>
            <person name="Taylor R.G."/>
            <person name="Tivey A."/>
            <person name="Walsh S.V."/>
            <person name="Warren T."/>
            <person name="Whitehead S."/>
            <person name="Woodward J.R."/>
            <person name="Volckaert G."/>
            <person name="Aert R."/>
            <person name="Robben J."/>
            <person name="Grymonprez B."/>
            <person name="Weltjens I."/>
            <person name="Vanstreels E."/>
            <person name="Rieger M."/>
            <person name="Schaefer M."/>
            <person name="Mueller-Auer S."/>
            <person name="Gabel C."/>
            <person name="Fuchs M."/>
            <person name="Duesterhoeft A."/>
            <person name="Fritzc C."/>
            <person name="Holzer E."/>
            <person name="Moestl D."/>
            <person name="Hilbert H."/>
            <person name="Borzym K."/>
            <person name="Langer I."/>
            <person name="Beck A."/>
            <person name="Lehrach H."/>
            <person name="Reinhardt R."/>
            <person name="Pohl T.M."/>
            <person name="Eger P."/>
            <person name="Zimmermann W."/>
            <person name="Wedler H."/>
            <person name="Wambutt R."/>
            <person name="Purnelle B."/>
            <person name="Goffeau A."/>
            <person name="Cadieu E."/>
            <person name="Dreano S."/>
            <person name="Gloux S."/>
            <person name="Lelaure V."/>
            <person name="Mottier S."/>
            <person name="Galibert F."/>
            <person name="Aves S.J."/>
            <person name="Xiang Z."/>
            <person name="Hunt C."/>
            <person name="Moore K."/>
            <person name="Hurst S.M."/>
            <person name="Lucas M."/>
            <person name="Rochet M."/>
            <person name="Gaillardin C."/>
            <person name="Tallada V.A."/>
            <person name="Garzon A."/>
            <person name="Thode G."/>
            <person name="Daga R.R."/>
            <person name="Cruzado L."/>
            <person name="Jimenez J."/>
            <person name="Sanchez M."/>
            <person name="del Rey F."/>
            <person name="Benito J."/>
            <person name="Dominguez A."/>
            <person name="Revuelta J.L."/>
            <person name="Moreno S."/>
            <person name="Armstrong J."/>
            <person name="Forsburg S.L."/>
            <person name="Cerutti L."/>
            <person name="Lowe T."/>
            <person name="McCombie W.R."/>
            <person name="Paulsen I."/>
            <person name="Potashkin J."/>
            <person name="Shpakovski G.V."/>
            <person name="Ussery D."/>
            <person name="Barrell B.G."/>
            <person name="Nurse P."/>
        </authorList>
    </citation>
    <scope>NUCLEOTIDE SEQUENCE [LARGE SCALE GENOMIC DNA]</scope>
    <source>
        <strain>972 / ATCC 24843</strain>
    </source>
</reference>
<reference key="2">
    <citation type="journal article" date="2005" name="J. Cell Sci.">
        <title>btn1, the Schizosaccharomyces pombe homologue of the human Batten disease gene CLN3, regulates vacuole homeostasis.</title>
        <authorList>
            <person name="Gachet Y."/>
            <person name="Codlin S."/>
            <person name="Hyams J.S."/>
            <person name="Mole S.E."/>
        </authorList>
    </citation>
    <scope>FUNCTION</scope>
    <scope>SUBCELLULAR LOCATION</scope>
    <scope>MUTAGENESIS OF GLY-137; GLU-240 AND VAL-278</scope>
</reference>
<reference key="3">
    <citation type="journal article" date="2006" name="Nat. Biotechnol.">
        <title>ORFeome cloning and global analysis of protein localization in the fission yeast Schizosaccharomyces pombe.</title>
        <authorList>
            <person name="Matsuyama A."/>
            <person name="Arai R."/>
            <person name="Yashiroda Y."/>
            <person name="Shirai A."/>
            <person name="Kamata A."/>
            <person name="Sekido S."/>
            <person name="Kobayashi Y."/>
            <person name="Hashimoto A."/>
            <person name="Hamamoto M."/>
            <person name="Hiraoka Y."/>
            <person name="Horinouchi S."/>
            <person name="Yoshida M."/>
        </authorList>
    </citation>
    <scope>SUBCELLULAR LOCATION [LARGE SCALE ANALYSIS]</scope>
</reference>
<name>BTN1_SCHPO</name>
<keyword id="KW-0029">Amino-acid transport</keyword>
<keyword id="KW-0256">Endoplasmic reticulum</keyword>
<keyword id="KW-0472">Membrane</keyword>
<keyword id="KW-1185">Reference proteome</keyword>
<keyword id="KW-0812">Transmembrane</keyword>
<keyword id="KW-1133">Transmembrane helix</keyword>
<keyword id="KW-0813">Transport</keyword>
<keyword id="KW-0926">Vacuole</keyword>